<evidence type="ECO:0000255" key="1"/>
<evidence type="ECO:0000269" key="2">
    <source>
    </source>
</evidence>
<evidence type="ECO:0000303" key="3">
    <source>
    </source>
</evidence>
<evidence type="ECO:0000312" key="4">
    <source>
        <dbReference type="Araport" id="AT3G12550"/>
    </source>
</evidence>
<evidence type="ECO:0000312" key="5">
    <source>
        <dbReference type="EMBL" id="AAG51004.1"/>
    </source>
</evidence>
<evidence type="ECO:0000312" key="6">
    <source>
        <dbReference type="EMBL" id="BAB02266.1"/>
    </source>
</evidence>
<proteinExistence type="predicted"/>
<feature type="chain" id="PRO_0000430683" description="Factor of DNA methylation 3">
    <location>
        <begin position="1"/>
        <end position="638"/>
    </location>
</feature>
<feature type="coiled-coil region" evidence="1">
    <location>
        <begin position="318"/>
        <end position="497"/>
    </location>
</feature>
<gene>
    <name evidence="3" type="primary">FDM3</name>
    <name evidence="4" type="ordered locus">At3g12550</name>
    <name evidence="6" type="ORF">T16H11.4</name>
    <name evidence="5" type="ORF">T2E22.14</name>
</gene>
<name>FDM3_ARATH</name>
<sequence length="638" mass="74229">MNNKLSDFEKNLYKKLKSGKLEVKVSYRTFLCPYCPDNKKKVGLYVDILQHASGVGNSQSKKRSLTEKASHRALAKYLIKDLAHYATSTISKRLKARTSFIPAETGDAPIIYDDAQFEKLVWPWKGVLVNIPTTSTEDGRSCTGESGPKLKDELIRRGFNPIRVRTVWDRFGHSGTGIVEFNRDWNGLQDALVFKKAYEGDGHGKKDWLCGATDSSLYAWLANADDYYRANILGENLRKMGDLKSIYRFAEEEARKDQKLLQRLNFMVENKQYRLKKLQIKYSQDSVKLKYETEEKEKILRAYSEDLTGRQQKSTDHFNRIFADHEKQKVQLESQIKELEIRKLELAKREAENETQRKIVAKELEQNAAINSYVQLSALEQQKTREKAQRLAVDHKMQKEKLHKRIAALERQLDQKQELELEVQQLKSQLSVMRLVELDSGSEIVNKVETFLRDLSETEGELAHLNQFNQDLVVQERKSNDELQEARRALISNLRDMGLHIGVKRMGELDTKPFMKAMRIKYCQEDLEDWAVEVIQLWEEYLKDPDWHPFKRIKLETAETIVEVIDEDDEKLRTLKNELGDDAYQAVANALLEINEYNPSGRYISSELWNFREDRKATLEEGVNSLLEQWNQAKHLKS</sequence>
<organism evidence="6">
    <name type="scientific">Arabidopsis thaliana</name>
    <name type="common">Mouse-ear cress</name>
    <dbReference type="NCBI Taxonomy" id="3702"/>
    <lineage>
        <taxon>Eukaryota</taxon>
        <taxon>Viridiplantae</taxon>
        <taxon>Streptophyta</taxon>
        <taxon>Embryophyta</taxon>
        <taxon>Tracheophyta</taxon>
        <taxon>Spermatophyta</taxon>
        <taxon>Magnoliopsida</taxon>
        <taxon>eudicotyledons</taxon>
        <taxon>Gunneridae</taxon>
        <taxon>Pentapetalae</taxon>
        <taxon>rosids</taxon>
        <taxon>malvids</taxon>
        <taxon>Brassicales</taxon>
        <taxon>Brassicaceae</taxon>
        <taxon>Camelineae</taxon>
        <taxon>Arabidopsis</taxon>
    </lineage>
</organism>
<accession>Q9LHB1</accession>
<accession>Q9C7B0</accession>
<keyword id="KW-0175">Coiled coil</keyword>
<keyword id="KW-1185">Reference proteome</keyword>
<keyword id="KW-0943">RNA-mediated gene silencing</keyword>
<protein>
    <recommendedName>
        <fullName evidence="3">Factor of DNA methylation 3</fullName>
    </recommendedName>
</protein>
<comment type="function">
    <text evidence="2">Acts in association with FDM4 and FDM5 for RNA-directed DNA methylation (RdDM).</text>
</comment>
<comment type="sequence caution">
    <conflict type="erroneous gene model prediction">
        <sequence resource="EMBL-CDS" id="AAG51004"/>
    </conflict>
</comment>
<dbReference type="EMBL" id="AP002055">
    <property type="protein sequence ID" value="BAB02266.1"/>
    <property type="molecule type" value="Genomic_DNA"/>
</dbReference>
<dbReference type="EMBL" id="AC069474">
    <property type="protein sequence ID" value="AAG51004.1"/>
    <property type="status" value="ALT_SEQ"/>
    <property type="molecule type" value="Genomic_DNA"/>
</dbReference>
<dbReference type="EMBL" id="CP002686">
    <property type="protein sequence ID" value="AEE75211.1"/>
    <property type="molecule type" value="Genomic_DNA"/>
</dbReference>
<dbReference type="EMBL" id="CP002686">
    <property type="protein sequence ID" value="AEE75212.1"/>
    <property type="molecule type" value="Genomic_DNA"/>
</dbReference>
<dbReference type="EMBL" id="CP002686">
    <property type="protein sequence ID" value="ANM64203.1"/>
    <property type="molecule type" value="Genomic_DNA"/>
</dbReference>
<dbReference type="RefSeq" id="NP_001189872.1">
    <property type="nucleotide sequence ID" value="NM_001202943.2"/>
</dbReference>
<dbReference type="RefSeq" id="NP_001326248.1">
    <property type="nucleotide sequence ID" value="NM_001337999.1"/>
</dbReference>
<dbReference type="RefSeq" id="NP_187861.2">
    <property type="nucleotide sequence ID" value="NM_112090.6"/>
</dbReference>
<dbReference type="SMR" id="Q9LHB1"/>
<dbReference type="FunCoup" id="Q9LHB1">
    <property type="interactions" value="287"/>
</dbReference>
<dbReference type="STRING" id="3702.Q9LHB1"/>
<dbReference type="PaxDb" id="3702-AT3G12550.2"/>
<dbReference type="ProteomicsDB" id="232078"/>
<dbReference type="EnsemblPlants" id="AT3G12550.1">
    <property type="protein sequence ID" value="AT3G12550.1"/>
    <property type="gene ID" value="AT3G12550"/>
</dbReference>
<dbReference type="EnsemblPlants" id="AT3G12550.2">
    <property type="protein sequence ID" value="AT3G12550.2"/>
    <property type="gene ID" value="AT3G12550"/>
</dbReference>
<dbReference type="EnsemblPlants" id="AT3G12550.4">
    <property type="protein sequence ID" value="AT3G12550.4"/>
    <property type="gene ID" value="AT3G12550"/>
</dbReference>
<dbReference type="GeneID" id="820435"/>
<dbReference type="Gramene" id="AT3G12550.1">
    <property type="protein sequence ID" value="AT3G12550.1"/>
    <property type="gene ID" value="AT3G12550"/>
</dbReference>
<dbReference type="Gramene" id="AT3G12550.2">
    <property type="protein sequence ID" value="AT3G12550.2"/>
    <property type="gene ID" value="AT3G12550"/>
</dbReference>
<dbReference type="Gramene" id="AT3G12550.4">
    <property type="protein sequence ID" value="AT3G12550.4"/>
    <property type="gene ID" value="AT3G12550"/>
</dbReference>
<dbReference type="KEGG" id="ath:AT3G12550"/>
<dbReference type="Araport" id="AT3G12550"/>
<dbReference type="TAIR" id="AT3G12550">
    <property type="gene designation" value="FDM3"/>
</dbReference>
<dbReference type="eggNOG" id="ENOG502QRE8">
    <property type="taxonomic scope" value="Eukaryota"/>
</dbReference>
<dbReference type="HOGENOM" id="CLU_021775_1_1_1"/>
<dbReference type="InParanoid" id="Q9LHB1"/>
<dbReference type="PRO" id="PR:Q9LHB1"/>
<dbReference type="Proteomes" id="UP000006548">
    <property type="component" value="Chromosome 3"/>
</dbReference>
<dbReference type="ExpressionAtlas" id="Q9LHB1">
    <property type="expression patterns" value="baseline and differential"/>
</dbReference>
<dbReference type="GO" id="GO:0080188">
    <property type="term" value="P:gene silencing by siRNA-directed DNA methylation"/>
    <property type="evidence" value="ECO:0000316"/>
    <property type="project" value="TAIR"/>
</dbReference>
<dbReference type="CDD" id="cd12266">
    <property type="entry name" value="RRM_like_XS"/>
    <property type="match status" value="1"/>
</dbReference>
<dbReference type="FunFam" id="3.30.70.2890:FF:000001">
    <property type="entry name" value="Factor of DNA methylation 2"/>
    <property type="match status" value="1"/>
</dbReference>
<dbReference type="Gene3D" id="3.30.70.2890">
    <property type="entry name" value="XS domain"/>
    <property type="match status" value="1"/>
</dbReference>
<dbReference type="InterPro" id="IPR045177">
    <property type="entry name" value="FDM1-5/IDN2"/>
</dbReference>
<dbReference type="InterPro" id="IPR005379">
    <property type="entry name" value="FDM1-5/IDN2_XH"/>
</dbReference>
<dbReference type="InterPro" id="IPR005380">
    <property type="entry name" value="XS_domain"/>
</dbReference>
<dbReference type="InterPro" id="IPR038588">
    <property type="entry name" value="XS_domain_sf"/>
</dbReference>
<dbReference type="InterPro" id="IPR005381">
    <property type="entry name" value="Znf-XS_domain"/>
</dbReference>
<dbReference type="PANTHER" id="PTHR21596:SF52">
    <property type="entry name" value="FACTOR OF DNA METHYLATION 3"/>
    <property type="match status" value="1"/>
</dbReference>
<dbReference type="PANTHER" id="PTHR21596">
    <property type="entry name" value="RIBONUCLEASE P SUBUNIT P38"/>
    <property type="match status" value="1"/>
</dbReference>
<dbReference type="Pfam" id="PF03469">
    <property type="entry name" value="XH"/>
    <property type="match status" value="1"/>
</dbReference>
<dbReference type="Pfam" id="PF03468">
    <property type="entry name" value="XS"/>
    <property type="match status" value="1"/>
</dbReference>
<dbReference type="Pfam" id="PF03470">
    <property type="entry name" value="zf-XS"/>
    <property type="match status" value="1"/>
</dbReference>
<reference key="1">
    <citation type="journal article" date="2000" name="DNA Res.">
        <title>Structural analysis of Arabidopsis thaliana chromosome 3. II. Sequence features of the 4,251,695 bp regions covered by 90 P1, TAC and BAC clones.</title>
        <authorList>
            <person name="Kaneko T."/>
            <person name="Katoh T."/>
            <person name="Sato S."/>
            <person name="Nakamura Y."/>
            <person name="Asamizu E."/>
            <person name="Tabata S."/>
        </authorList>
    </citation>
    <scope>NUCLEOTIDE SEQUENCE [LARGE SCALE GENOMIC DNA]</scope>
    <source>
        <strain>cv. Columbia</strain>
    </source>
</reference>
<reference key="2">
    <citation type="journal article" date="2000" name="Nature">
        <title>Sequence and analysis of chromosome 3 of the plant Arabidopsis thaliana.</title>
        <authorList>
            <person name="Salanoubat M."/>
            <person name="Lemcke K."/>
            <person name="Rieger M."/>
            <person name="Ansorge W."/>
            <person name="Unseld M."/>
            <person name="Fartmann B."/>
            <person name="Valle G."/>
            <person name="Bloecker H."/>
            <person name="Perez-Alonso M."/>
            <person name="Obermaier B."/>
            <person name="Delseny M."/>
            <person name="Boutry M."/>
            <person name="Grivell L.A."/>
            <person name="Mache R."/>
            <person name="Puigdomenech P."/>
            <person name="De Simone V."/>
            <person name="Choisne N."/>
            <person name="Artiguenave F."/>
            <person name="Robert C."/>
            <person name="Brottier P."/>
            <person name="Wincker P."/>
            <person name="Cattolico L."/>
            <person name="Weissenbach J."/>
            <person name="Saurin W."/>
            <person name="Quetier F."/>
            <person name="Schaefer M."/>
            <person name="Mueller-Auer S."/>
            <person name="Gabel C."/>
            <person name="Fuchs M."/>
            <person name="Benes V."/>
            <person name="Wurmbach E."/>
            <person name="Drzonek H."/>
            <person name="Erfle H."/>
            <person name="Jordan N."/>
            <person name="Bangert S."/>
            <person name="Wiedelmann R."/>
            <person name="Kranz H."/>
            <person name="Voss H."/>
            <person name="Holland R."/>
            <person name="Brandt P."/>
            <person name="Nyakatura G."/>
            <person name="Vezzi A."/>
            <person name="D'Angelo M."/>
            <person name="Pallavicini A."/>
            <person name="Toppo S."/>
            <person name="Simionati B."/>
            <person name="Conrad A."/>
            <person name="Hornischer K."/>
            <person name="Kauer G."/>
            <person name="Loehnert T.-H."/>
            <person name="Nordsiek G."/>
            <person name="Reichelt J."/>
            <person name="Scharfe M."/>
            <person name="Schoen O."/>
            <person name="Bargues M."/>
            <person name="Terol J."/>
            <person name="Climent J."/>
            <person name="Navarro P."/>
            <person name="Collado C."/>
            <person name="Perez-Perez A."/>
            <person name="Ottenwaelder B."/>
            <person name="Duchemin D."/>
            <person name="Cooke R."/>
            <person name="Laudie M."/>
            <person name="Berger-Llauro C."/>
            <person name="Purnelle B."/>
            <person name="Masuy D."/>
            <person name="de Haan M."/>
            <person name="Maarse A.C."/>
            <person name="Alcaraz J.-P."/>
            <person name="Cottet A."/>
            <person name="Casacuberta E."/>
            <person name="Monfort A."/>
            <person name="Argiriou A."/>
            <person name="Flores M."/>
            <person name="Liguori R."/>
            <person name="Vitale D."/>
            <person name="Mannhaupt G."/>
            <person name="Haase D."/>
            <person name="Schoof H."/>
            <person name="Rudd S."/>
            <person name="Zaccaria P."/>
            <person name="Mewes H.-W."/>
            <person name="Mayer K.F.X."/>
            <person name="Kaul S."/>
            <person name="Town C.D."/>
            <person name="Koo H.L."/>
            <person name="Tallon L.J."/>
            <person name="Jenkins J."/>
            <person name="Rooney T."/>
            <person name="Rizzo M."/>
            <person name="Walts A."/>
            <person name="Utterback T."/>
            <person name="Fujii C.Y."/>
            <person name="Shea T.P."/>
            <person name="Creasy T.H."/>
            <person name="Haas B."/>
            <person name="Maiti R."/>
            <person name="Wu D."/>
            <person name="Peterson J."/>
            <person name="Van Aken S."/>
            <person name="Pai G."/>
            <person name="Militscher J."/>
            <person name="Sellers P."/>
            <person name="Gill J.E."/>
            <person name="Feldblyum T.V."/>
            <person name="Preuss D."/>
            <person name="Lin X."/>
            <person name="Nierman W.C."/>
            <person name="Salzberg S.L."/>
            <person name="White O."/>
            <person name="Venter J.C."/>
            <person name="Fraser C.M."/>
            <person name="Kaneko T."/>
            <person name="Nakamura Y."/>
            <person name="Sato S."/>
            <person name="Kato T."/>
            <person name="Asamizu E."/>
            <person name="Sasamoto S."/>
            <person name="Kimura T."/>
            <person name="Idesawa K."/>
            <person name="Kawashima K."/>
            <person name="Kishida Y."/>
            <person name="Kiyokawa C."/>
            <person name="Kohara M."/>
            <person name="Matsumoto M."/>
            <person name="Matsuno A."/>
            <person name="Muraki A."/>
            <person name="Nakayama S."/>
            <person name="Nakazaki N."/>
            <person name="Shinpo S."/>
            <person name="Takeuchi C."/>
            <person name="Wada T."/>
            <person name="Watanabe A."/>
            <person name="Yamada M."/>
            <person name="Yasuda M."/>
            <person name="Tabata S."/>
        </authorList>
    </citation>
    <scope>NUCLEOTIDE SEQUENCE [LARGE SCALE GENOMIC DNA]</scope>
    <source>
        <strain>cv. Columbia</strain>
    </source>
</reference>
<reference key="3">
    <citation type="journal article" date="2017" name="Plant J.">
        <title>Araport11: a complete reannotation of the Arabidopsis thaliana reference genome.</title>
        <authorList>
            <person name="Cheng C.Y."/>
            <person name="Krishnakumar V."/>
            <person name="Chan A.P."/>
            <person name="Thibaud-Nissen F."/>
            <person name="Schobel S."/>
            <person name="Town C.D."/>
        </authorList>
    </citation>
    <scope>GENOME REANNOTATION</scope>
    <source>
        <strain>cv. Columbia</strain>
    </source>
</reference>
<reference key="4">
    <citation type="journal article" date="2012" name="Nucleic Acids Res.">
        <title>A subgroup of SGS3-like proteins act redundantly in RNA-directed DNA methylation.</title>
        <authorList>
            <person name="Xie M."/>
            <person name="Ren G."/>
            <person name="Costa-Nunes P."/>
            <person name="Pontes O."/>
            <person name="Yu B."/>
        </authorList>
    </citation>
    <scope>FUNCTION</scope>
</reference>